<organism>
    <name type="scientific">Rattus norvegicus</name>
    <name type="common">Rat</name>
    <dbReference type="NCBI Taxonomy" id="10116"/>
    <lineage>
        <taxon>Eukaryota</taxon>
        <taxon>Metazoa</taxon>
        <taxon>Chordata</taxon>
        <taxon>Craniata</taxon>
        <taxon>Vertebrata</taxon>
        <taxon>Euteleostomi</taxon>
        <taxon>Mammalia</taxon>
        <taxon>Eutheria</taxon>
        <taxon>Euarchontoglires</taxon>
        <taxon>Glires</taxon>
        <taxon>Rodentia</taxon>
        <taxon>Myomorpha</taxon>
        <taxon>Muroidea</taxon>
        <taxon>Muridae</taxon>
        <taxon>Murinae</taxon>
        <taxon>Rattus</taxon>
    </lineage>
</organism>
<proteinExistence type="evidence at protein level"/>
<protein>
    <recommendedName>
        <fullName>Zinc finger protein 423</fullName>
    </recommendedName>
    <alternativeName>
        <fullName>Olf1/EBF-associated zinc finger protein</fullName>
        <shortName>rOAZ</shortName>
    </alternativeName>
    <alternativeName>
        <fullName>Smad- and Olf-interacting zinc finger protein</fullName>
    </alternativeName>
</protein>
<accession>O08961</accession>
<accession>Q63681</accession>
<comment type="function">
    <text evidence="5">Transcription factor that can both act as an activator or a repressor depending on the context. Plays a central role in BMP signaling and olfactory neurogenesis. Associates with SMADs in response to BMP2 leading to activate transcription of BMP target genes. Acts as a transcriptional repressor via its interaction with EBF1, a transcription factor involved in terminal olfactory receptor neurons differentiation; this interaction preventing EBF1 to bind DNA and activate olfactory-specific genes. Involved in olfactory neurogenesis by participating in a developmental switch that regulates the transition from differentiation to maturation in olfactory receptor neurons. Controls proliferation and differentiation of neural precursors in cerebellar vermis formation.</text>
</comment>
<comment type="subunit">
    <text evidence="1">Homodimer. Interacts with PARP1, SMAD1 and SMAD4 (By similarity). Interacts with EBF1. Interacts with CEP290 (By similarity).</text>
</comment>
<comment type="subcellular location">
    <subcellularLocation>
        <location evidence="1">Nucleus</location>
    </subcellularLocation>
</comment>
<comment type="tissue specificity">
    <text evidence="5">Expressed in brain, eye, olfactory epithelium, spleen and heart. Expressed in the basal layer, consisting of neural precursor cells and immature sensory neurons of the olfactory epithelium, but not in the mature receptor cells.</text>
</comment>
<comment type="domain">
    <text evidence="1">Uses different DNA- and protein-binding zinc fingers to regulate the distinct BMP-Smad and Olf signaling pathways. C2H2-type zinc fingers 14-19 mediate the interaction with SMAD1 and SMAD4, while zinc fingers 28-30 mediate the interaction with EBF1. zinc fingers 2-8 bind the 5'-CCGCCC-3' DNA sequence in concert with EBF1, while zinc fingers 9-13 bind BMP target gene promoters in concert with SMADs (By similarity).</text>
</comment>
<comment type="similarity">
    <text evidence="6">Belongs to the krueppel C2H2-type zinc-finger protein family.</text>
</comment>
<comment type="sequence caution" evidence="6">
    <conflict type="frameshift">
        <sequence resource="EMBL-CDS" id="AAA42353"/>
    </conflict>
</comment>
<comment type="sequence caution" evidence="6">
    <conflict type="erroneous initiation">
        <sequence resource="EMBL-CDS" id="AAB58646"/>
    </conflict>
</comment>
<sequence>MSRRKQAKPRSVKVEEGEASDFSLAWDSSVAAAGGLEGESECDRKSSRALEDRNSVTSQEERNEDDEDVEDESIYTCDHCQQDFESLADLTDHRAHRCPGDGDDDPQLSWVASSPSSKDVASPTQMIGDGCDLGLGEEEGGTGLPYPCQFCDKSFIRLSYLKRHEQIHSDKLPFKCTFCSRLFKHKRSRDRHIKLHTGDKKYHCHECEAAFSRRDHLKIHLKTHSSSKPFKCSVCKRGFSSTSSLQSHMQAHKKNKEHLAKSEKEAKKDDFMCDYCEDTFSQTEELEKHVLTLHPQLSEKADLQCIHCPEVFVDESTLLAHIHQAHANQKHKCPMCPEQFSSVEGVYCHLDSHRQPDSSNHSVSPDPVLGSVASMSSATPDSTPDPVLGSVASMSSATPDSSASVERGSTPDSTLKPLRGQKKMRDDGQSWSKVVYSCPYCSKRDFTSLAVLEIHLKTIHADKPQQSHTCQICLDSMPTLYNLNEHVRKLHKSHAYPVMQFGNISAFHCNYCPEMFADINSLQEHIRVSHCGPNANPPDGNNAFFCNQCSMGFLTESSLTEHIQQAHCSVGSTKLESPVIQPTQSFMEVYSCPYCTNSPIFGSILKLTKHIKENHKNIPLAHSKKSKAEQSPVSSDVEVSSPKRQRLSGSANSISNGEYPCNQCDLKFSNFESFQTHLKLHLELLLRKQACPQCKEDFDSQESLLQHLTVHYMTTSTHYVCESCDKQFSSVDDLQKHLLDMHTFVLYHCTLCQEVFDSKVSIQVHLAVKHSNEKKMYRCTACNWDFRKEADLQVHVKHSHLGNPAKAHKCIFCGETFSTEVELQCHITTHSKKYNCRFCSKAFHAVLLLEKHLREKHCVFDPAAENGTANGVPPTSTKKAEPADLQGMLLKNPEAPNSHEASEDDVDASEPMYGCDICGAAYTMEVLLQNHRLRDHNIRPGEDDGSRKKAEFIKGSHKCNVCSRTFFSENGLREHLQTHRGPAKHYMCPICGERFPSLLTLTEHKVTHSKSLDTGTCRICKMPLQSEEEFIEHCQMHPDLRNSLTGFRCVVCMQTVTSTLELKIHGTFHMQKLAGSSAASSPNGQGLQKLYKCALCLKEFRSKQDLVRLDVNGLPYGLCAGCMARSANGQVGGLAPPEPADRPCAGLRCPECNVKFESAEDLESHMQVDHRDLTPETSGPRKGAQTSPVPRKKTYQCIKCQMTFENEREIQIHVANHMIEEGINHECKLCNQMFDSPAKLLCHLIEHSFEGMGGTFKCPVCFTVFVQANKLQQHIFAVHGQEDKIYDCSQCPQKFFFQTELQNHTMSQHAQ</sequence>
<feature type="chain" id="PRO_0000308597" description="Zinc finger protein 423">
    <location>
        <begin position="1"/>
        <end position="1311"/>
    </location>
</feature>
<feature type="zinc finger region" description="C2H2-type 1; degenerate" evidence="3">
    <location>
        <begin position="75"/>
        <end position="101"/>
    </location>
</feature>
<feature type="zinc finger region" description="C2H2-type 2" evidence="3">
    <location>
        <begin position="146"/>
        <end position="168"/>
    </location>
</feature>
<feature type="zinc finger region" description="C2H2-type 3" evidence="3">
    <location>
        <begin position="174"/>
        <end position="196"/>
    </location>
</feature>
<feature type="zinc finger region" description="C2H2-type 4" evidence="3">
    <location>
        <begin position="202"/>
        <end position="224"/>
    </location>
</feature>
<feature type="zinc finger region" description="C2H2-type 5" evidence="3">
    <location>
        <begin position="230"/>
        <end position="252"/>
    </location>
</feature>
<feature type="zinc finger region" description="C2H2-type 6" evidence="3">
    <location>
        <begin position="271"/>
        <end position="294"/>
    </location>
</feature>
<feature type="zinc finger region" description="C2H2-type 7" evidence="3">
    <location>
        <begin position="303"/>
        <end position="326"/>
    </location>
</feature>
<feature type="zinc finger region" description="C2H2-type 8" evidence="3">
    <location>
        <begin position="331"/>
        <end position="353"/>
    </location>
</feature>
<feature type="zinc finger region" description="C2H2-type 9; degenerate" evidence="3">
    <location>
        <begin position="436"/>
        <end position="460"/>
    </location>
</feature>
<feature type="zinc finger region" description="C2H2-type 10" evidence="3">
    <location>
        <begin position="468"/>
        <end position="491"/>
    </location>
</feature>
<feature type="zinc finger region" description="C2H2-type 11" evidence="3">
    <location>
        <begin position="507"/>
        <end position="530"/>
    </location>
</feature>
<feature type="zinc finger region" description="C2H2-type 12" evidence="3">
    <location>
        <begin position="544"/>
        <end position="567"/>
    </location>
</feature>
<feature type="zinc finger region" description="C2H2-type 13; atypical" evidence="3">
    <location>
        <begin position="590"/>
        <end position="615"/>
    </location>
</feature>
<feature type="zinc finger region" description="C2H2-type 14" evidence="3">
    <location>
        <begin position="659"/>
        <end position="681"/>
    </location>
</feature>
<feature type="zinc finger region" description="C2H2-type 15" evidence="3">
    <location>
        <begin position="689"/>
        <end position="711"/>
    </location>
</feature>
<feature type="zinc finger region" description="C2H2-type 16" evidence="3">
    <location>
        <begin position="719"/>
        <end position="742"/>
    </location>
</feature>
<feature type="zinc finger region" description="C2H2-type 17" evidence="3">
    <location>
        <begin position="747"/>
        <end position="770"/>
    </location>
</feature>
<feature type="zinc finger region" description="C2H2-type 18" evidence="3">
    <location>
        <begin position="777"/>
        <end position="800"/>
    </location>
</feature>
<feature type="zinc finger region" description="C2H2-type 19" evidence="3">
    <location>
        <begin position="808"/>
        <end position="830"/>
    </location>
</feature>
<feature type="zinc finger region" description="C2H2-type 20" evidence="3">
    <location>
        <begin position="834"/>
        <end position="857"/>
    </location>
</feature>
<feature type="zinc finger region" description="C2H2-type 21; degenerate" evidence="3">
    <location>
        <begin position="913"/>
        <end position="935"/>
    </location>
</feature>
<feature type="zinc finger region" description="C2H2-type 22" evidence="3">
    <location>
        <begin position="957"/>
        <end position="979"/>
    </location>
</feature>
<feature type="zinc finger region" description="C2H2-type 23" evidence="3">
    <location>
        <begin position="986"/>
        <end position="1008"/>
    </location>
</feature>
<feature type="zinc finger region" description="C2H2-type 24" evidence="3">
    <location>
        <begin position="1047"/>
        <end position="1069"/>
    </location>
</feature>
<feature type="zinc finger region" description="C2H2-type 25; degenerate" evidence="3">
    <location>
        <begin position="1091"/>
        <end position="1109"/>
    </location>
</feature>
<feature type="zinc finger region" description="C2H2-type 26" evidence="3">
    <location>
        <begin position="1147"/>
        <end position="1170"/>
    </location>
</feature>
<feature type="zinc finger region" description="C2H2-type 27" evidence="3">
    <location>
        <begin position="1195"/>
        <end position="1217"/>
    </location>
</feature>
<feature type="zinc finger region" description="C2H2-type 28" evidence="3">
    <location>
        <begin position="1225"/>
        <end position="1247"/>
    </location>
</feature>
<feature type="zinc finger region" description="C2H2-type 29" evidence="3">
    <location>
        <begin position="1256"/>
        <end position="1279"/>
    </location>
</feature>
<feature type="zinc finger region" description="C2H2-type 30" evidence="3">
    <location>
        <begin position="1286"/>
        <end position="1309"/>
    </location>
</feature>
<feature type="region of interest" description="Disordered" evidence="4">
    <location>
        <begin position="1"/>
        <end position="21"/>
    </location>
</feature>
<feature type="region of interest" description="Disordered" evidence="4">
    <location>
        <begin position="34"/>
        <end position="70"/>
    </location>
</feature>
<feature type="region of interest" description="Disordered" evidence="4">
    <location>
        <begin position="95"/>
        <end position="123"/>
    </location>
</feature>
<feature type="region of interest" description="Disordered" evidence="4">
    <location>
        <begin position="354"/>
        <end position="426"/>
    </location>
</feature>
<feature type="region of interest" description="Disordered" evidence="4">
    <location>
        <begin position="617"/>
        <end position="654"/>
    </location>
</feature>
<feature type="region of interest" description="Disordered" evidence="4">
    <location>
        <begin position="1163"/>
        <end position="1190"/>
    </location>
</feature>
<feature type="compositionally biased region" description="Basic residues" evidence="4">
    <location>
        <begin position="1"/>
        <end position="11"/>
    </location>
</feature>
<feature type="compositionally biased region" description="Basic and acidic residues" evidence="4">
    <location>
        <begin position="41"/>
        <end position="54"/>
    </location>
</feature>
<feature type="compositionally biased region" description="Polar residues" evidence="4">
    <location>
        <begin position="110"/>
        <end position="123"/>
    </location>
</feature>
<feature type="compositionally biased region" description="Polar residues" evidence="4">
    <location>
        <begin position="373"/>
        <end position="382"/>
    </location>
</feature>
<feature type="compositionally biased region" description="Low complexity" evidence="4">
    <location>
        <begin position="390"/>
        <end position="404"/>
    </location>
</feature>
<feature type="compositionally biased region" description="Low complexity" evidence="4">
    <location>
        <begin position="631"/>
        <end position="642"/>
    </location>
</feature>
<feature type="compositionally biased region" description="Basic and acidic residues" evidence="4">
    <location>
        <begin position="1163"/>
        <end position="1174"/>
    </location>
</feature>
<feature type="modified residue" description="Phosphoserine" evidence="2">
    <location>
        <position position="55"/>
    </location>
</feature>
<feature type="modified residue" description="Phosphoserine" evidence="2">
    <location>
        <position position="58"/>
    </location>
</feature>
<feature type="modified residue" description="Phosphoserine" evidence="2">
    <location>
        <position position="631"/>
    </location>
</feature>
<feature type="modified residue" description="Phosphoserine" evidence="2">
    <location>
        <position position="1081"/>
    </location>
</feature>
<keyword id="KW-0010">Activator</keyword>
<keyword id="KW-0217">Developmental protein</keyword>
<keyword id="KW-0221">Differentiation</keyword>
<keyword id="KW-0238">DNA-binding</keyword>
<keyword id="KW-0479">Metal-binding</keyword>
<keyword id="KW-0524">Neurogenesis</keyword>
<keyword id="KW-0539">Nucleus</keyword>
<keyword id="KW-0597">Phosphoprotein</keyword>
<keyword id="KW-1185">Reference proteome</keyword>
<keyword id="KW-0677">Repeat</keyword>
<keyword id="KW-0678">Repressor</keyword>
<keyword id="KW-0804">Transcription</keyword>
<keyword id="KW-0805">Transcription regulation</keyword>
<keyword id="KW-0862">Zinc</keyword>
<keyword id="KW-0863">Zinc-finger</keyword>
<name>ZN423_RAT</name>
<evidence type="ECO:0000250" key="1"/>
<evidence type="ECO:0000250" key="2">
    <source>
        <dbReference type="UniProtKB" id="Q2M1K9"/>
    </source>
</evidence>
<evidence type="ECO:0000255" key="3">
    <source>
        <dbReference type="PROSITE-ProRule" id="PRU00042"/>
    </source>
</evidence>
<evidence type="ECO:0000256" key="4">
    <source>
        <dbReference type="SAM" id="MobiDB-lite"/>
    </source>
</evidence>
<evidence type="ECO:0000269" key="5">
    <source>
    </source>
</evidence>
<evidence type="ECO:0000305" key="6"/>
<gene>
    <name type="primary">Znf423</name>
    <name type="synonym">Oaz</name>
    <name type="synonym">Zfp423</name>
</gene>
<dbReference type="EMBL" id="L03386">
    <property type="protein sequence ID" value="AAA42353.1"/>
    <property type="status" value="ALT_FRAME"/>
    <property type="molecule type" value="mRNA"/>
</dbReference>
<dbReference type="EMBL" id="U92564">
    <property type="protein sequence ID" value="AAB58646.1"/>
    <property type="status" value="ALT_INIT"/>
    <property type="molecule type" value="mRNA"/>
</dbReference>
<dbReference type="PIR" id="T33754">
    <property type="entry name" value="T33754"/>
</dbReference>
<dbReference type="PIR" id="T34020">
    <property type="entry name" value="T34020"/>
</dbReference>
<dbReference type="RefSeq" id="NP_446035.2">
    <property type="nucleotide sequence ID" value="NM_053583.2"/>
</dbReference>
<dbReference type="BMRB" id="O08961"/>
<dbReference type="BioGRID" id="250171">
    <property type="interactions" value="1"/>
</dbReference>
<dbReference type="FunCoup" id="O08961">
    <property type="interactions" value="1351"/>
</dbReference>
<dbReference type="STRING" id="10116.ENSRNOP00000020028"/>
<dbReference type="GlyGen" id="O08961">
    <property type="glycosylation" value="2 sites"/>
</dbReference>
<dbReference type="PhosphoSitePlus" id="O08961"/>
<dbReference type="PaxDb" id="10116-ENSRNOP00000020028"/>
<dbReference type="AGR" id="RGD:621664"/>
<dbReference type="RGD" id="621664">
    <property type="gene designation" value="Zfp423"/>
</dbReference>
<dbReference type="eggNOG" id="KOG1721">
    <property type="taxonomic scope" value="Eukaryota"/>
</dbReference>
<dbReference type="InParanoid" id="O08961"/>
<dbReference type="PhylomeDB" id="O08961"/>
<dbReference type="PRO" id="PR:O08961"/>
<dbReference type="Proteomes" id="UP000002494">
    <property type="component" value="Unplaced"/>
</dbReference>
<dbReference type="GO" id="GO:0005634">
    <property type="term" value="C:nucleus"/>
    <property type="evidence" value="ECO:0000250"/>
    <property type="project" value="UniProtKB"/>
</dbReference>
<dbReference type="GO" id="GO:0000981">
    <property type="term" value="F:DNA-binding transcription factor activity, RNA polymerase II-specific"/>
    <property type="evidence" value="ECO:0000318"/>
    <property type="project" value="GO_Central"/>
</dbReference>
<dbReference type="GO" id="GO:0042802">
    <property type="term" value="F:identical protein binding"/>
    <property type="evidence" value="ECO:0000353"/>
    <property type="project" value="RGD"/>
</dbReference>
<dbReference type="GO" id="GO:0044877">
    <property type="term" value="F:protein-containing complex binding"/>
    <property type="evidence" value="ECO:0000353"/>
    <property type="project" value="RGD"/>
</dbReference>
<dbReference type="GO" id="GO:0043565">
    <property type="term" value="F:sequence-specific DNA binding"/>
    <property type="evidence" value="ECO:0000314"/>
    <property type="project" value="RGD"/>
</dbReference>
<dbReference type="GO" id="GO:0008270">
    <property type="term" value="F:zinc ion binding"/>
    <property type="evidence" value="ECO:0007669"/>
    <property type="project" value="UniProtKB-KW"/>
</dbReference>
<dbReference type="GO" id="GO:0050873">
    <property type="term" value="P:brown fat cell differentiation"/>
    <property type="evidence" value="ECO:0000266"/>
    <property type="project" value="RGD"/>
</dbReference>
<dbReference type="GO" id="GO:0021930">
    <property type="term" value="P:cerebellar granule cell precursor proliferation"/>
    <property type="evidence" value="ECO:0000266"/>
    <property type="project" value="RGD"/>
</dbReference>
<dbReference type="GO" id="GO:0060271">
    <property type="term" value="P:cilium assembly"/>
    <property type="evidence" value="ECO:0000266"/>
    <property type="project" value="RGD"/>
</dbReference>
<dbReference type="GO" id="GO:0120163">
    <property type="term" value="P:negative regulation of cold-induced thermogenesis"/>
    <property type="evidence" value="ECO:0000250"/>
    <property type="project" value="YuBioLab"/>
</dbReference>
<dbReference type="GO" id="GO:0045892">
    <property type="term" value="P:negative regulation of DNA-templated transcription"/>
    <property type="evidence" value="ECO:0000314"/>
    <property type="project" value="RGD"/>
</dbReference>
<dbReference type="GO" id="GO:0007219">
    <property type="term" value="P:Notch signaling pathway"/>
    <property type="evidence" value="ECO:0000250"/>
    <property type="project" value="UniProtKB"/>
</dbReference>
<dbReference type="GO" id="GO:0030513">
    <property type="term" value="P:positive regulation of BMP signaling pathway"/>
    <property type="evidence" value="ECO:0000250"/>
    <property type="project" value="UniProtKB"/>
</dbReference>
<dbReference type="GO" id="GO:0045893">
    <property type="term" value="P:positive regulation of DNA-templated transcription"/>
    <property type="evidence" value="ECO:0000250"/>
    <property type="project" value="UniProtKB"/>
</dbReference>
<dbReference type="GO" id="GO:0061512">
    <property type="term" value="P:protein localization to cilium"/>
    <property type="evidence" value="ECO:0000266"/>
    <property type="project" value="RGD"/>
</dbReference>
<dbReference type="GO" id="GO:0006357">
    <property type="term" value="P:regulation of transcription by RNA polymerase II"/>
    <property type="evidence" value="ECO:0000318"/>
    <property type="project" value="GO_Central"/>
</dbReference>
<dbReference type="GO" id="GO:0007224">
    <property type="term" value="P:smoothened signaling pathway"/>
    <property type="evidence" value="ECO:0000266"/>
    <property type="project" value="RGD"/>
</dbReference>
<dbReference type="GO" id="GO:0050872">
    <property type="term" value="P:white fat cell differentiation"/>
    <property type="evidence" value="ECO:0000266"/>
    <property type="project" value="RGD"/>
</dbReference>
<dbReference type="FunFam" id="3.30.160.60:FF:000468">
    <property type="entry name" value="B-cell lymphoma 6 protein-like"/>
    <property type="match status" value="1"/>
</dbReference>
<dbReference type="FunFam" id="3.30.160.60:FF:000469">
    <property type="entry name" value="Zinc finger protein 423"/>
    <property type="match status" value="1"/>
</dbReference>
<dbReference type="FunFam" id="3.30.160.60:FF:000483">
    <property type="entry name" value="Zinc finger protein 423"/>
    <property type="match status" value="1"/>
</dbReference>
<dbReference type="FunFam" id="3.30.160.60:FF:000548">
    <property type="entry name" value="Zinc finger protein 423"/>
    <property type="match status" value="1"/>
</dbReference>
<dbReference type="FunFam" id="3.30.160.60:FF:000760">
    <property type="entry name" value="Zinc finger protein 423"/>
    <property type="match status" value="1"/>
</dbReference>
<dbReference type="FunFam" id="3.30.160.60:FF:004063">
    <property type="entry name" value="Zinc finger protein 423"/>
    <property type="match status" value="1"/>
</dbReference>
<dbReference type="FunFam" id="3.30.160.60:FF:000244">
    <property type="entry name" value="zinc finger protein 423"/>
    <property type="match status" value="1"/>
</dbReference>
<dbReference type="FunFam" id="3.30.160.60:FF:001417">
    <property type="entry name" value="zinc finger protein 423"/>
    <property type="match status" value="1"/>
</dbReference>
<dbReference type="FunFam" id="3.30.160.60:FF:002384">
    <property type="entry name" value="zinc finger protein 423"/>
    <property type="match status" value="1"/>
</dbReference>
<dbReference type="FunFam" id="3.30.160.60:FF:000143">
    <property type="entry name" value="Zinc finger protein 521"/>
    <property type="match status" value="1"/>
</dbReference>
<dbReference type="FunFam" id="3.30.160.60:FF:000167">
    <property type="entry name" value="Zinc finger protein 521"/>
    <property type="match status" value="1"/>
</dbReference>
<dbReference type="FunFam" id="3.30.160.60:FF:000261">
    <property type="entry name" value="Zinc finger protein 521"/>
    <property type="match status" value="1"/>
</dbReference>
<dbReference type="Gene3D" id="3.30.160.60">
    <property type="entry name" value="Classic Zinc Finger"/>
    <property type="match status" value="13"/>
</dbReference>
<dbReference type="InterPro" id="IPR036236">
    <property type="entry name" value="Znf_C2H2_sf"/>
</dbReference>
<dbReference type="InterPro" id="IPR013087">
    <property type="entry name" value="Znf_C2H2_type"/>
</dbReference>
<dbReference type="PANTHER" id="PTHR24379:SF127">
    <property type="entry name" value="BLOODY FINGERS-RELATED"/>
    <property type="match status" value="1"/>
</dbReference>
<dbReference type="PANTHER" id="PTHR24379">
    <property type="entry name" value="KRAB AND ZINC FINGER DOMAIN-CONTAINING"/>
    <property type="match status" value="1"/>
</dbReference>
<dbReference type="Pfam" id="PF00096">
    <property type="entry name" value="zf-C2H2"/>
    <property type="match status" value="7"/>
</dbReference>
<dbReference type="Pfam" id="PF13912">
    <property type="entry name" value="zf-C2H2_6"/>
    <property type="match status" value="2"/>
</dbReference>
<dbReference type="SMART" id="SM00355">
    <property type="entry name" value="ZnF_C2H2"/>
    <property type="match status" value="30"/>
</dbReference>
<dbReference type="SUPFAM" id="SSF57667">
    <property type="entry name" value="beta-beta-alpha zinc fingers"/>
    <property type="match status" value="10"/>
</dbReference>
<dbReference type="PROSITE" id="PS00028">
    <property type="entry name" value="ZINC_FINGER_C2H2_1"/>
    <property type="match status" value="27"/>
</dbReference>
<dbReference type="PROSITE" id="PS50157">
    <property type="entry name" value="ZINC_FINGER_C2H2_2"/>
    <property type="match status" value="23"/>
</dbReference>
<reference key="1">
    <citation type="submission" date="1992-10" db="EMBL/GenBank/DDBJ databases">
        <title>Zinc finger protein coding cDNA from adult rat aorta.</title>
        <authorList>
            <person name="Patel C.V."/>
            <person name="Gorski D.H."/>
            <person name="Walsh K."/>
        </authorList>
    </citation>
    <scope>NUCLEOTIDE SEQUENCE [MRNA]</scope>
    <source>
        <tissue>Aorta</tissue>
    </source>
</reference>
<reference key="2">
    <citation type="journal article" date="1997" name="J. Neurosci.">
        <title>Cloning and functional characterization of Roaz, a zinc finger protein that interacts with O/E-1 to regulate gene expression: implications for olfactory neuronal development.</title>
        <authorList>
            <person name="Tsai R.Y.L."/>
            <person name="Reed R.R."/>
        </authorList>
    </citation>
    <scope>NUCLEOTIDE SEQUENCE [MRNA] OF 14-1311</scope>
    <scope>FUNCTION</scope>
    <scope>DNA-BINDING</scope>
    <scope>TISSUE SPECIFICITY</scope>
    <scope>DOMAIN</scope>
    <scope>INTERACTION WITH EBF1</scope>
    <source>
        <strain>Sprague-Dawley</strain>
    </source>
</reference>
<reference key="3">
    <citation type="journal article" date="1998" name="Mol. Cell. Biol.">
        <title>Identification of DNA recognition sequences and protein interaction domains of the multiple-Zn-finger protein Roaz.</title>
        <authorList>
            <person name="Tsai R.Y.L."/>
            <person name="Reed R.R."/>
        </authorList>
    </citation>
    <scope>DOMAIN</scope>
    <scope>DNA-BINDING</scope>
    <scope>SUBUNIT</scope>
</reference>